<accession>Q88MX7</accession>
<comment type="function">
    <text evidence="1">Catalyzes the conversion of S-adenosyl-L-methionine (SAM) to carboxy-S-adenosyl-L-methionine (Cx-SAM).</text>
</comment>
<comment type="catalytic activity">
    <reaction evidence="1">
        <text>prephenate + S-adenosyl-L-methionine = carboxy-S-adenosyl-L-methionine + 3-phenylpyruvate + H2O</text>
        <dbReference type="Rhea" id="RHEA:51692"/>
        <dbReference type="ChEBI" id="CHEBI:15377"/>
        <dbReference type="ChEBI" id="CHEBI:18005"/>
        <dbReference type="ChEBI" id="CHEBI:29934"/>
        <dbReference type="ChEBI" id="CHEBI:59789"/>
        <dbReference type="ChEBI" id="CHEBI:134278"/>
    </reaction>
</comment>
<comment type="subunit">
    <text evidence="1">Homodimer.</text>
</comment>
<comment type="similarity">
    <text evidence="1">Belongs to the class I-like SAM-binding methyltransferase superfamily. Cx-SAM synthase family.</text>
</comment>
<keyword id="KW-1185">Reference proteome</keyword>
<keyword id="KW-0949">S-adenosyl-L-methionine</keyword>
<keyword id="KW-0808">Transferase</keyword>
<protein>
    <recommendedName>
        <fullName evidence="1">Carboxy-S-adenosyl-L-methionine synthase</fullName>
        <shortName evidence="1">Cx-SAM synthase</shortName>
        <ecNumber evidence="1">2.1.3.-</ecNumber>
    </recommendedName>
</protein>
<proteinExistence type="inferred from homology"/>
<evidence type="ECO:0000255" key="1">
    <source>
        <dbReference type="HAMAP-Rule" id="MF_01589"/>
    </source>
</evidence>
<organism>
    <name type="scientific">Pseudomonas putida (strain ATCC 47054 / DSM 6125 / CFBP 8728 / NCIMB 11950 / KT2440)</name>
    <dbReference type="NCBI Taxonomy" id="160488"/>
    <lineage>
        <taxon>Bacteria</taxon>
        <taxon>Pseudomonadati</taxon>
        <taxon>Pseudomonadota</taxon>
        <taxon>Gammaproteobacteria</taxon>
        <taxon>Pseudomonadales</taxon>
        <taxon>Pseudomonadaceae</taxon>
        <taxon>Pseudomonas</taxon>
    </lineage>
</organism>
<sequence length="247" mass="27668">MSKQPDRLFSQPLEQVPDFVFNEDVVRVFPDMIKRSVPGYPTIVENLGVLAARFAQPGTALYDLGASLGAVTQSLRRHVRSDGCRVIAVDNSAAMVERCRQYLTAQDSMFQELLPVQVLEADILALPFEPASVVAMNFTLQFIAPDQRLELLGRIRQALLPGGALILSEKLRFADEQEQDLLNELHLDFKRANGYSELEIAQKRSAIENVMKPDTLETHQERLRAAGFSKVVPWFQCLNFASLIALP</sequence>
<dbReference type="EC" id="2.1.3.-" evidence="1"/>
<dbReference type="EMBL" id="AE015451">
    <property type="protein sequence ID" value="AAN67063.1"/>
    <property type="molecule type" value="Genomic_DNA"/>
</dbReference>
<dbReference type="RefSeq" id="NP_743599.1">
    <property type="nucleotide sequence ID" value="NC_002947.4"/>
</dbReference>
<dbReference type="RefSeq" id="WP_010952541.1">
    <property type="nucleotide sequence ID" value="NZ_CP169744.1"/>
</dbReference>
<dbReference type="SMR" id="Q88MX7"/>
<dbReference type="STRING" id="160488.PP_1441"/>
<dbReference type="PaxDb" id="160488-PP_1441"/>
<dbReference type="GeneID" id="83682024"/>
<dbReference type="KEGG" id="ppu:PP_1441"/>
<dbReference type="PATRIC" id="fig|160488.4.peg.1529"/>
<dbReference type="eggNOG" id="COG2226">
    <property type="taxonomic scope" value="Bacteria"/>
</dbReference>
<dbReference type="HOGENOM" id="CLU_078475_0_0_6"/>
<dbReference type="OrthoDB" id="9779941at2"/>
<dbReference type="PhylomeDB" id="Q88MX7"/>
<dbReference type="BioCyc" id="PPUT160488:G1G01-1533-MONOMER"/>
<dbReference type="Proteomes" id="UP000000556">
    <property type="component" value="Chromosome"/>
</dbReference>
<dbReference type="GO" id="GO:0016743">
    <property type="term" value="F:carboxyl- or carbamoyltransferase activity"/>
    <property type="evidence" value="ECO:0007669"/>
    <property type="project" value="UniProtKB-UniRule"/>
</dbReference>
<dbReference type="GO" id="GO:1904047">
    <property type="term" value="F:S-adenosyl-L-methionine binding"/>
    <property type="evidence" value="ECO:0007669"/>
    <property type="project" value="UniProtKB-UniRule"/>
</dbReference>
<dbReference type="GO" id="GO:0002098">
    <property type="term" value="P:tRNA wobble uridine modification"/>
    <property type="evidence" value="ECO:0007669"/>
    <property type="project" value="InterPro"/>
</dbReference>
<dbReference type="CDD" id="cd02440">
    <property type="entry name" value="AdoMet_MTases"/>
    <property type="match status" value="1"/>
</dbReference>
<dbReference type="Gene3D" id="3.40.50.150">
    <property type="entry name" value="Vaccinia Virus protein VP39"/>
    <property type="match status" value="1"/>
</dbReference>
<dbReference type="HAMAP" id="MF_01589">
    <property type="entry name" value="Cx_SAM_synthase"/>
    <property type="match status" value="1"/>
</dbReference>
<dbReference type="InterPro" id="IPR005271">
    <property type="entry name" value="CmoA"/>
</dbReference>
<dbReference type="InterPro" id="IPR041698">
    <property type="entry name" value="Methyltransf_25"/>
</dbReference>
<dbReference type="InterPro" id="IPR029063">
    <property type="entry name" value="SAM-dependent_MTases_sf"/>
</dbReference>
<dbReference type="NCBIfam" id="TIGR00740">
    <property type="entry name" value="carboxy-S-adenosyl-L-methionine synthase CmoA"/>
    <property type="match status" value="1"/>
</dbReference>
<dbReference type="NCBIfam" id="NF011995">
    <property type="entry name" value="PRK15451.1"/>
    <property type="match status" value="1"/>
</dbReference>
<dbReference type="PANTHER" id="PTHR43861:SF2">
    <property type="entry name" value="CARBOXY-S-ADENOSYL-L-METHIONINE SYNTHASE"/>
    <property type="match status" value="1"/>
</dbReference>
<dbReference type="PANTHER" id="PTHR43861">
    <property type="entry name" value="TRANS-ACONITATE 2-METHYLTRANSFERASE-RELATED"/>
    <property type="match status" value="1"/>
</dbReference>
<dbReference type="Pfam" id="PF13649">
    <property type="entry name" value="Methyltransf_25"/>
    <property type="match status" value="1"/>
</dbReference>
<dbReference type="PIRSF" id="PIRSF006325">
    <property type="entry name" value="MeTrfase_bac"/>
    <property type="match status" value="1"/>
</dbReference>
<dbReference type="SUPFAM" id="SSF53335">
    <property type="entry name" value="S-adenosyl-L-methionine-dependent methyltransferases"/>
    <property type="match status" value="1"/>
</dbReference>
<feature type="chain" id="PRO_0000314361" description="Carboxy-S-adenosyl-L-methionine synthase">
    <location>
        <begin position="1"/>
        <end position="247"/>
    </location>
</feature>
<feature type="binding site" evidence="1">
    <location>
        <position position="40"/>
    </location>
    <ligand>
        <name>S-adenosyl-L-methionine</name>
        <dbReference type="ChEBI" id="CHEBI:59789"/>
    </ligand>
</feature>
<feature type="binding site" evidence="1">
    <location>
        <begin position="65"/>
        <end position="67"/>
    </location>
    <ligand>
        <name>S-adenosyl-L-methionine</name>
        <dbReference type="ChEBI" id="CHEBI:59789"/>
    </ligand>
</feature>
<feature type="binding site" evidence="1">
    <location>
        <begin position="90"/>
        <end position="91"/>
    </location>
    <ligand>
        <name>S-adenosyl-L-methionine</name>
        <dbReference type="ChEBI" id="CHEBI:59789"/>
    </ligand>
</feature>
<feature type="binding site" evidence="1">
    <location>
        <begin position="122"/>
        <end position="123"/>
    </location>
    <ligand>
        <name>S-adenosyl-L-methionine</name>
        <dbReference type="ChEBI" id="CHEBI:59789"/>
    </ligand>
</feature>
<feature type="binding site" evidence="1">
    <location>
        <position position="137"/>
    </location>
    <ligand>
        <name>S-adenosyl-L-methionine</name>
        <dbReference type="ChEBI" id="CHEBI:59789"/>
    </ligand>
</feature>
<feature type="binding site" evidence="1">
    <location>
        <position position="204"/>
    </location>
    <ligand>
        <name>S-adenosyl-L-methionine</name>
        <dbReference type="ChEBI" id="CHEBI:59789"/>
    </ligand>
</feature>
<gene>
    <name evidence="1" type="primary">cmoA</name>
    <name type="ordered locus">PP_1441</name>
</gene>
<reference key="1">
    <citation type="journal article" date="2002" name="Environ. Microbiol.">
        <title>Complete genome sequence and comparative analysis of the metabolically versatile Pseudomonas putida KT2440.</title>
        <authorList>
            <person name="Nelson K.E."/>
            <person name="Weinel C."/>
            <person name="Paulsen I.T."/>
            <person name="Dodson R.J."/>
            <person name="Hilbert H."/>
            <person name="Martins dos Santos V.A.P."/>
            <person name="Fouts D.E."/>
            <person name="Gill S.R."/>
            <person name="Pop M."/>
            <person name="Holmes M."/>
            <person name="Brinkac L.M."/>
            <person name="Beanan M.J."/>
            <person name="DeBoy R.T."/>
            <person name="Daugherty S.C."/>
            <person name="Kolonay J.F."/>
            <person name="Madupu R."/>
            <person name="Nelson W.C."/>
            <person name="White O."/>
            <person name="Peterson J.D."/>
            <person name="Khouri H.M."/>
            <person name="Hance I."/>
            <person name="Chris Lee P."/>
            <person name="Holtzapple E.K."/>
            <person name="Scanlan D."/>
            <person name="Tran K."/>
            <person name="Moazzez A."/>
            <person name="Utterback T.R."/>
            <person name="Rizzo M."/>
            <person name="Lee K."/>
            <person name="Kosack D."/>
            <person name="Moestl D."/>
            <person name="Wedler H."/>
            <person name="Lauber J."/>
            <person name="Stjepandic D."/>
            <person name="Hoheisel J."/>
            <person name="Straetz M."/>
            <person name="Heim S."/>
            <person name="Kiewitz C."/>
            <person name="Eisen J.A."/>
            <person name="Timmis K.N."/>
            <person name="Duesterhoeft A."/>
            <person name="Tuemmler B."/>
            <person name="Fraser C.M."/>
        </authorList>
    </citation>
    <scope>NUCLEOTIDE SEQUENCE [LARGE SCALE GENOMIC DNA]</scope>
    <source>
        <strain>ATCC 47054 / DSM 6125 / CFBP 8728 / NCIMB 11950 / KT2440</strain>
    </source>
</reference>
<name>CMOA_PSEPK</name>